<evidence type="ECO:0000269" key="1">
    <source>
    </source>
</evidence>
<evidence type="ECO:0000303" key="2">
    <source>
    </source>
</evidence>
<evidence type="ECO:0000305" key="3"/>
<protein>
    <recommendedName>
        <fullName>Unknown protein from spot 112 of 2D-PAGE of thylakoid</fullName>
    </recommendedName>
</protein>
<reference evidence="3" key="1">
    <citation type="journal article" date="2000" name="Plant Cell">
        <title>Proteomics of the chloroplast: systematic identification and targeting analysis of lumenal and peripheral thylakoid proteins.</title>
        <authorList>
            <person name="Peltier J.-B."/>
            <person name="Friso G."/>
            <person name="Kalume D.E."/>
            <person name="Roepstorff P."/>
            <person name="Nilsson F."/>
            <person name="Adamska I."/>
            <person name="van Wijk K.J."/>
        </authorList>
    </citation>
    <scope>PROTEIN SEQUENCE</scope>
    <scope>SUBCELLULAR LOCATION</scope>
    <source>
        <strain evidence="1">cv. De Grace</strain>
        <tissue evidence="1">Leaf</tissue>
    </source>
</reference>
<keyword id="KW-0150">Chloroplast</keyword>
<keyword id="KW-0903">Direct protein sequencing</keyword>
<keyword id="KW-0934">Plastid</keyword>
<keyword id="KW-0793">Thylakoid</keyword>
<name>UT112_PEA</name>
<comment type="subcellular location">
    <subcellularLocation>
        <location evidence="1">Plastid</location>
        <location evidence="1">Chloroplast thylakoid</location>
    </subcellularLocation>
</comment>
<comment type="miscellaneous">
    <text evidence="1">On the 2D-gel the determined pI of this protein is: 6.0, its MW is: 22.9 kDa.</text>
</comment>
<organism>
    <name type="scientific">Pisum sativum</name>
    <name type="common">Garden pea</name>
    <name type="synonym">Lathyrus oleraceus</name>
    <dbReference type="NCBI Taxonomy" id="3888"/>
    <lineage>
        <taxon>Eukaryota</taxon>
        <taxon>Viridiplantae</taxon>
        <taxon>Streptophyta</taxon>
        <taxon>Embryophyta</taxon>
        <taxon>Tracheophyta</taxon>
        <taxon>Spermatophyta</taxon>
        <taxon>Magnoliopsida</taxon>
        <taxon>eudicotyledons</taxon>
        <taxon>Gunneridae</taxon>
        <taxon>Pentapetalae</taxon>
        <taxon>rosids</taxon>
        <taxon>fabids</taxon>
        <taxon>Fabales</taxon>
        <taxon>Fabaceae</taxon>
        <taxon>Papilionoideae</taxon>
        <taxon>50 kb inversion clade</taxon>
        <taxon>NPAAA clade</taxon>
        <taxon>Hologalegina</taxon>
        <taxon>IRL clade</taxon>
        <taxon>Fabeae</taxon>
        <taxon>Pisum</taxon>
    </lineage>
</organism>
<dbReference type="GO" id="GO:0009534">
    <property type="term" value="C:chloroplast thylakoid"/>
    <property type="evidence" value="ECO:0007669"/>
    <property type="project" value="UniProtKB-SubCell"/>
</dbReference>
<sequence>ATKGSSDNRVLTGV</sequence>
<accession>P82330</accession>
<feature type="chain" id="PRO_0000234474" description="Unknown protein from spot 112 of 2D-PAGE of thylakoid">
    <location>
        <begin position="1"/>
        <end position="14" status="greater than"/>
    </location>
</feature>
<feature type="non-terminal residue" evidence="2">
    <location>
        <position position="14"/>
    </location>
</feature>
<proteinExistence type="evidence at protein level"/>